<keyword id="KW-0001">2Fe-2S</keyword>
<keyword id="KW-0028">Amino-acid biosynthesis</keyword>
<keyword id="KW-0100">Branched-chain amino acid biosynthesis</keyword>
<keyword id="KW-0408">Iron</keyword>
<keyword id="KW-0411">Iron-sulfur</keyword>
<keyword id="KW-0456">Lyase</keyword>
<keyword id="KW-0460">Magnesium</keyword>
<keyword id="KW-0479">Metal-binding</keyword>
<accession>B7M5B9</accession>
<sequence>MPKYRSATTTHGRNMAGARALWRATGMTDADFGKPIIAVVNSFTQFVPGHVHLRDLGKLVAEQIEAAGGVAKEFNTIAVDDGIAMGHGGMLYSLPSRELIADSVEYMVNAHCADAMVCISNCDKITPGMLMASLRLNIPVIFVSGGPMEAGKTKLSDQIIKLDLVDAMIQGADPKVSDSQSDQVERSACPTCGSCSGMFTANSMNCLTEALGLSQPGNGSLLATHADRKQLFLNAGKRIVELTKRYYEQNDESALPRNIASKAAFENAMTLDIAMGGSTNTVLHLLAAAQEAEIDFTMSDIDKLSRKVPQLCKVAPSTQKYHMEDVHRAGGVIGILGELDRAGLLNRDVKNVLGLTLPQTLEQYDVMLTQDDAVKNMFRAGPAGIRTTQAFSQDCRWDSLDDDRANGCIRSLEHAYSKDGGLAVLYGNFAENGCIVKTAGVDDSILKFTGPAKVYESQDDAVEAILGGKVVAGDVVVIRYEGPKGGPGMQEMLYPTSFLKSMGLGKACALITDGRFSGGTSGLSIGHVSPEAASGGSIGLIEDGDLIAIDIPNRGIQLQVSDAELAARREAQEARGDKAWTPKNRERQVSFALRAYASLATSADKGAVRDKSKLGG</sequence>
<dbReference type="EC" id="4.2.1.9" evidence="1"/>
<dbReference type="EMBL" id="CU928160">
    <property type="protein sequence ID" value="CAR00743.1"/>
    <property type="molecule type" value="Genomic_DNA"/>
</dbReference>
<dbReference type="RefSeq" id="WP_001127394.1">
    <property type="nucleotide sequence ID" value="NC_011741.1"/>
</dbReference>
<dbReference type="SMR" id="B7M5B9"/>
<dbReference type="GeneID" id="75204762"/>
<dbReference type="KEGG" id="ecr:ECIAI1_3958"/>
<dbReference type="HOGENOM" id="CLU_014271_4_2_6"/>
<dbReference type="UniPathway" id="UPA00047">
    <property type="reaction ID" value="UER00057"/>
</dbReference>
<dbReference type="UniPathway" id="UPA00049">
    <property type="reaction ID" value="UER00061"/>
</dbReference>
<dbReference type="GO" id="GO:0005829">
    <property type="term" value="C:cytosol"/>
    <property type="evidence" value="ECO:0007669"/>
    <property type="project" value="TreeGrafter"/>
</dbReference>
<dbReference type="GO" id="GO:0051537">
    <property type="term" value="F:2 iron, 2 sulfur cluster binding"/>
    <property type="evidence" value="ECO:0007669"/>
    <property type="project" value="UniProtKB-UniRule"/>
</dbReference>
<dbReference type="GO" id="GO:0004160">
    <property type="term" value="F:dihydroxy-acid dehydratase activity"/>
    <property type="evidence" value="ECO:0007669"/>
    <property type="project" value="UniProtKB-UniRule"/>
</dbReference>
<dbReference type="GO" id="GO:0000287">
    <property type="term" value="F:magnesium ion binding"/>
    <property type="evidence" value="ECO:0007669"/>
    <property type="project" value="UniProtKB-UniRule"/>
</dbReference>
<dbReference type="GO" id="GO:0009097">
    <property type="term" value="P:isoleucine biosynthetic process"/>
    <property type="evidence" value="ECO:0007669"/>
    <property type="project" value="UniProtKB-UniRule"/>
</dbReference>
<dbReference type="GO" id="GO:0009099">
    <property type="term" value="P:L-valine biosynthetic process"/>
    <property type="evidence" value="ECO:0007669"/>
    <property type="project" value="UniProtKB-UniRule"/>
</dbReference>
<dbReference type="FunFam" id="3.50.30.80:FF:000001">
    <property type="entry name" value="Dihydroxy-acid dehydratase"/>
    <property type="match status" value="1"/>
</dbReference>
<dbReference type="Gene3D" id="3.50.30.80">
    <property type="entry name" value="IlvD/EDD C-terminal domain-like"/>
    <property type="match status" value="1"/>
</dbReference>
<dbReference type="HAMAP" id="MF_00012">
    <property type="entry name" value="IlvD"/>
    <property type="match status" value="1"/>
</dbReference>
<dbReference type="InterPro" id="IPR042096">
    <property type="entry name" value="Dihydro-acid_dehy_C"/>
</dbReference>
<dbReference type="InterPro" id="IPR004404">
    <property type="entry name" value="DihydroxyA_deHydtase"/>
</dbReference>
<dbReference type="InterPro" id="IPR020558">
    <property type="entry name" value="DiOHA_6PGluconate_deHydtase_CS"/>
</dbReference>
<dbReference type="InterPro" id="IPR056740">
    <property type="entry name" value="ILV_EDD_C"/>
</dbReference>
<dbReference type="InterPro" id="IPR000581">
    <property type="entry name" value="ILV_EDD_N"/>
</dbReference>
<dbReference type="InterPro" id="IPR037237">
    <property type="entry name" value="IlvD/EDD_N"/>
</dbReference>
<dbReference type="NCBIfam" id="TIGR00110">
    <property type="entry name" value="ilvD"/>
    <property type="match status" value="1"/>
</dbReference>
<dbReference type="NCBIfam" id="NF009103">
    <property type="entry name" value="PRK12448.1"/>
    <property type="match status" value="1"/>
</dbReference>
<dbReference type="PANTHER" id="PTHR43661">
    <property type="entry name" value="D-XYLONATE DEHYDRATASE"/>
    <property type="match status" value="1"/>
</dbReference>
<dbReference type="PANTHER" id="PTHR43661:SF3">
    <property type="entry name" value="D-XYLONATE DEHYDRATASE YAGF-RELATED"/>
    <property type="match status" value="1"/>
</dbReference>
<dbReference type="Pfam" id="PF24877">
    <property type="entry name" value="ILV_EDD_C"/>
    <property type="match status" value="1"/>
</dbReference>
<dbReference type="Pfam" id="PF00920">
    <property type="entry name" value="ILVD_EDD_N"/>
    <property type="match status" value="1"/>
</dbReference>
<dbReference type="SUPFAM" id="SSF143975">
    <property type="entry name" value="IlvD/EDD N-terminal domain-like"/>
    <property type="match status" value="1"/>
</dbReference>
<dbReference type="SUPFAM" id="SSF52016">
    <property type="entry name" value="LeuD/IlvD-like"/>
    <property type="match status" value="1"/>
</dbReference>
<dbReference type="PROSITE" id="PS00886">
    <property type="entry name" value="ILVD_EDD_1"/>
    <property type="match status" value="1"/>
</dbReference>
<dbReference type="PROSITE" id="PS00887">
    <property type="entry name" value="ILVD_EDD_2"/>
    <property type="match status" value="1"/>
</dbReference>
<gene>
    <name evidence="1" type="primary">ilvD</name>
    <name type="ordered locus">ECIAI1_3958</name>
</gene>
<feature type="chain" id="PRO_1000116271" description="Dihydroxy-acid dehydratase">
    <location>
        <begin position="1"/>
        <end position="616"/>
    </location>
</feature>
<feature type="active site" description="Proton acceptor" evidence="1">
    <location>
        <position position="517"/>
    </location>
</feature>
<feature type="binding site" evidence="1">
    <location>
        <position position="81"/>
    </location>
    <ligand>
        <name>Mg(2+)</name>
        <dbReference type="ChEBI" id="CHEBI:18420"/>
    </ligand>
</feature>
<feature type="binding site" evidence="1">
    <location>
        <position position="122"/>
    </location>
    <ligand>
        <name>[2Fe-2S] cluster</name>
        <dbReference type="ChEBI" id="CHEBI:190135"/>
    </ligand>
</feature>
<feature type="binding site" evidence="1">
    <location>
        <position position="123"/>
    </location>
    <ligand>
        <name>Mg(2+)</name>
        <dbReference type="ChEBI" id="CHEBI:18420"/>
    </ligand>
</feature>
<feature type="binding site" description="via carbamate group" evidence="1">
    <location>
        <position position="124"/>
    </location>
    <ligand>
        <name>Mg(2+)</name>
        <dbReference type="ChEBI" id="CHEBI:18420"/>
    </ligand>
</feature>
<feature type="binding site" evidence="1">
    <location>
        <position position="195"/>
    </location>
    <ligand>
        <name>[2Fe-2S] cluster</name>
        <dbReference type="ChEBI" id="CHEBI:190135"/>
    </ligand>
</feature>
<feature type="binding site" evidence="1">
    <location>
        <position position="491"/>
    </location>
    <ligand>
        <name>Mg(2+)</name>
        <dbReference type="ChEBI" id="CHEBI:18420"/>
    </ligand>
</feature>
<feature type="modified residue" description="N6-carboxylysine" evidence="1">
    <location>
        <position position="124"/>
    </location>
</feature>
<evidence type="ECO:0000255" key="1">
    <source>
        <dbReference type="HAMAP-Rule" id="MF_00012"/>
    </source>
</evidence>
<organism>
    <name type="scientific">Escherichia coli O8 (strain IAI1)</name>
    <dbReference type="NCBI Taxonomy" id="585034"/>
    <lineage>
        <taxon>Bacteria</taxon>
        <taxon>Pseudomonadati</taxon>
        <taxon>Pseudomonadota</taxon>
        <taxon>Gammaproteobacteria</taxon>
        <taxon>Enterobacterales</taxon>
        <taxon>Enterobacteriaceae</taxon>
        <taxon>Escherichia</taxon>
    </lineage>
</organism>
<proteinExistence type="inferred from homology"/>
<protein>
    <recommendedName>
        <fullName evidence="1">Dihydroxy-acid dehydratase</fullName>
        <shortName evidence="1">DAD</shortName>
        <ecNumber evidence="1">4.2.1.9</ecNumber>
    </recommendedName>
</protein>
<name>ILVD_ECO8A</name>
<reference key="1">
    <citation type="journal article" date="2009" name="PLoS Genet.">
        <title>Organised genome dynamics in the Escherichia coli species results in highly diverse adaptive paths.</title>
        <authorList>
            <person name="Touchon M."/>
            <person name="Hoede C."/>
            <person name="Tenaillon O."/>
            <person name="Barbe V."/>
            <person name="Baeriswyl S."/>
            <person name="Bidet P."/>
            <person name="Bingen E."/>
            <person name="Bonacorsi S."/>
            <person name="Bouchier C."/>
            <person name="Bouvet O."/>
            <person name="Calteau A."/>
            <person name="Chiapello H."/>
            <person name="Clermont O."/>
            <person name="Cruveiller S."/>
            <person name="Danchin A."/>
            <person name="Diard M."/>
            <person name="Dossat C."/>
            <person name="Karoui M.E."/>
            <person name="Frapy E."/>
            <person name="Garry L."/>
            <person name="Ghigo J.M."/>
            <person name="Gilles A.M."/>
            <person name="Johnson J."/>
            <person name="Le Bouguenec C."/>
            <person name="Lescat M."/>
            <person name="Mangenot S."/>
            <person name="Martinez-Jehanne V."/>
            <person name="Matic I."/>
            <person name="Nassif X."/>
            <person name="Oztas S."/>
            <person name="Petit M.A."/>
            <person name="Pichon C."/>
            <person name="Rouy Z."/>
            <person name="Ruf C.S."/>
            <person name="Schneider D."/>
            <person name="Tourret J."/>
            <person name="Vacherie B."/>
            <person name="Vallenet D."/>
            <person name="Medigue C."/>
            <person name="Rocha E.P.C."/>
            <person name="Denamur E."/>
        </authorList>
    </citation>
    <scope>NUCLEOTIDE SEQUENCE [LARGE SCALE GENOMIC DNA]</scope>
    <source>
        <strain>IAI1</strain>
    </source>
</reference>
<comment type="function">
    <text evidence="1">Functions in the biosynthesis of branched-chain amino acids. Catalyzes the dehydration of (2R,3R)-2,3-dihydroxy-3-methylpentanoate (2,3-dihydroxy-3-methylvalerate) into 2-oxo-3-methylpentanoate (2-oxo-3-methylvalerate) and of (2R)-2,3-dihydroxy-3-methylbutanoate (2,3-dihydroxyisovalerate) into 2-oxo-3-methylbutanoate (2-oxoisovalerate), the penultimate precursor to L-isoleucine and L-valine, respectively.</text>
</comment>
<comment type="catalytic activity">
    <reaction evidence="1">
        <text>(2R)-2,3-dihydroxy-3-methylbutanoate = 3-methyl-2-oxobutanoate + H2O</text>
        <dbReference type="Rhea" id="RHEA:24809"/>
        <dbReference type="ChEBI" id="CHEBI:11851"/>
        <dbReference type="ChEBI" id="CHEBI:15377"/>
        <dbReference type="ChEBI" id="CHEBI:49072"/>
        <dbReference type="EC" id="4.2.1.9"/>
    </reaction>
    <physiologicalReaction direction="left-to-right" evidence="1">
        <dbReference type="Rhea" id="RHEA:24810"/>
    </physiologicalReaction>
</comment>
<comment type="catalytic activity">
    <reaction evidence="1">
        <text>(2R,3R)-2,3-dihydroxy-3-methylpentanoate = (S)-3-methyl-2-oxopentanoate + H2O</text>
        <dbReference type="Rhea" id="RHEA:27694"/>
        <dbReference type="ChEBI" id="CHEBI:15377"/>
        <dbReference type="ChEBI" id="CHEBI:35146"/>
        <dbReference type="ChEBI" id="CHEBI:49258"/>
        <dbReference type="EC" id="4.2.1.9"/>
    </reaction>
    <physiologicalReaction direction="left-to-right" evidence="1">
        <dbReference type="Rhea" id="RHEA:27695"/>
    </physiologicalReaction>
</comment>
<comment type="cofactor">
    <cofactor evidence="1">
        <name>[2Fe-2S] cluster</name>
        <dbReference type="ChEBI" id="CHEBI:190135"/>
    </cofactor>
    <text evidence="1">Binds 1 [2Fe-2S] cluster per subunit. This cluster acts as a Lewis acid cofactor.</text>
</comment>
<comment type="cofactor">
    <cofactor evidence="1">
        <name>Mg(2+)</name>
        <dbReference type="ChEBI" id="CHEBI:18420"/>
    </cofactor>
</comment>
<comment type="pathway">
    <text evidence="1">Amino-acid biosynthesis; L-isoleucine biosynthesis; L-isoleucine from 2-oxobutanoate: step 3/4.</text>
</comment>
<comment type="pathway">
    <text evidence="1">Amino-acid biosynthesis; L-valine biosynthesis; L-valine from pyruvate: step 3/4.</text>
</comment>
<comment type="subunit">
    <text evidence="1">Homodimer.</text>
</comment>
<comment type="similarity">
    <text evidence="1">Belongs to the IlvD/Edd family.</text>
</comment>